<protein>
    <recommendedName>
        <fullName evidence="2">ATP synthase subunit alpha</fullName>
        <ecNumber evidence="2">7.1.2.2</ecNumber>
    </recommendedName>
    <alternativeName>
        <fullName evidence="2">ATP synthase F1 sector subunit alpha</fullName>
    </alternativeName>
    <alternativeName>
        <fullName evidence="2">F-ATPase subunit alpha</fullName>
    </alternativeName>
</protein>
<proteinExistence type="inferred from homology"/>
<sequence length="526" mass="56820">MSTTVRPDEVSSILRKQLAGFESEADVYDVGTVLQVGDGIARVYGLSKAAAGELLEFPNKVMGMALNLEEDNVGAVLFGESNLVKEGDTVKRTGILASIPVGEAMLGRVINPLGEPIDGKGPIETQIRLPLERRAPGVIYRKSVHEPLQTGLKAIDSMIPIGRGQRELIIGDRQTGKTAVAIDTIINQKGKGVFCIYVAIGLKGSTVAQVVNTLEKFGAMEYTTVITATASDPAPLQFIAPFAGATLGEYFRDTGRHALVVYDDLSKQAVAYRQLSLLLRRPPGREAYPGDVFYLHSRLLERAAKITDDIEVARKMNDLPDALKSMVKGGGSLTALPVIETQAGDVSAYIPTNVISITDGQIFLESNLFNSGQRPAINVGISVSRVGGSAQIKAMKKVAGTLRLDLAQFRELEAFSKFGSDLDKTTKAQLDRGARLVEILKQGQYIPMAVEKQVAIIFLGTQGLLDAVDVTRIRKFEEEFLGLLEHKHPEVLKAIAETGTLETDTANKIKEAAQKFIASFNQKAKA</sequence>
<feature type="chain" id="PRO_0000302636" description="ATP synthase subunit alpha">
    <location>
        <begin position="1"/>
        <end position="526"/>
    </location>
</feature>
<feature type="binding site" evidence="2">
    <location>
        <begin position="171"/>
        <end position="178"/>
    </location>
    <ligand>
        <name>ATP</name>
        <dbReference type="ChEBI" id="CHEBI:30616"/>
    </ligand>
</feature>
<feature type="site" description="Required for activity" evidence="2">
    <location>
        <position position="382"/>
    </location>
</feature>
<reference key="1">
    <citation type="submission" date="2006-12" db="EMBL/GenBank/DDBJ databases">
        <title>Complete sequence of Chlorobium phaeobacteroides DSM 266.</title>
        <authorList>
            <consortium name="US DOE Joint Genome Institute"/>
            <person name="Copeland A."/>
            <person name="Lucas S."/>
            <person name="Lapidus A."/>
            <person name="Barry K."/>
            <person name="Detter J.C."/>
            <person name="Glavina del Rio T."/>
            <person name="Hammon N."/>
            <person name="Israni S."/>
            <person name="Pitluck S."/>
            <person name="Goltsman E."/>
            <person name="Schmutz J."/>
            <person name="Larimer F."/>
            <person name="Land M."/>
            <person name="Hauser L."/>
            <person name="Mikhailova N."/>
            <person name="Li T."/>
            <person name="Overmann J."/>
            <person name="Bryant D.A."/>
            <person name="Richardson P."/>
        </authorList>
    </citation>
    <scope>NUCLEOTIDE SEQUENCE [LARGE SCALE GENOMIC DNA]</scope>
    <source>
        <strain>DSM 266 / SMG 266 / 2430</strain>
    </source>
</reference>
<gene>
    <name evidence="2" type="primary">atpA</name>
    <name type="ordered locus">Cpha266_2544</name>
</gene>
<evidence type="ECO:0000250" key="1"/>
<evidence type="ECO:0000255" key="2">
    <source>
        <dbReference type="HAMAP-Rule" id="MF_01346"/>
    </source>
</evidence>
<accession>A1BJF5</accession>
<name>ATPA_CHLPD</name>
<comment type="function">
    <text evidence="2">Produces ATP from ADP in the presence of a proton gradient across the membrane. The alpha chain is a regulatory subunit.</text>
</comment>
<comment type="catalytic activity">
    <reaction evidence="2">
        <text>ATP + H2O + 4 H(+)(in) = ADP + phosphate + 5 H(+)(out)</text>
        <dbReference type="Rhea" id="RHEA:57720"/>
        <dbReference type="ChEBI" id="CHEBI:15377"/>
        <dbReference type="ChEBI" id="CHEBI:15378"/>
        <dbReference type="ChEBI" id="CHEBI:30616"/>
        <dbReference type="ChEBI" id="CHEBI:43474"/>
        <dbReference type="ChEBI" id="CHEBI:456216"/>
        <dbReference type="EC" id="7.1.2.2"/>
    </reaction>
</comment>
<comment type="subunit">
    <text evidence="1">F-type ATPases have 2 components, CF(1) - the catalytic core - and CF(0) - the membrane proton channel. CF(1) has five subunits: alpha(3), beta(3), gamma(1), delta(1), epsilon(1). CF(0) has four main subunits: a(1), b(1), b'(1) and c(9-12) (By similarity).</text>
</comment>
<comment type="subcellular location">
    <subcellularLocation>
        <location evidence="2">Cell inner membrane</location>
        <topology evidence="2">Peripheral membrane protein</topology>
    </subcellularLocation>
</comment>
<comment type="similarity">
    <text evidence="2">Belongs to the ATPase alpha/beta chains family.</text>
</comment>
<dbReference type="EC" id="7.1.2.2" evidence="2"/>
<dbReference type="EMBL" id="CP000492">
    <property type="protein sequence ID" value="ABL66532.1"/>
    <property type="molecule type" value="Genomic_DNA"/>
</dbReference>
<dbReference type="RefSeq" id="WP_011746309.1">
    <property type="nucleotide sequence ID" value="NC_008639.1"/>
</dbReference>
<dbReference type="SMR" id="A1BJF5"/>
<dbReference type="STRING" id="290317.Cpha266_2544"/>
<dbReference type="KEGG" id="cph:Cpha266_2544"/>
<dbReference type="eggNOG" id="COG0056">
    <property type="taxonomic scope" value="Bacteria"/>
</dbReference>
<dbReference type="HOGENOM" id="CLU_010091_2_1_10"/>
<dbReference type="OrthoDB" id="9803053at2"/>
<dbReference type="Proteomes" id="UP000008701">
    <property type="component" value="Chromosome"/>
</dbReference>
<dbReference type="GO" id="GO:0005886">
    <property type="term" value="C:plasma membrane"/>
    <property type="evidence" value="ECO:0007669"/>
    <property type="project" value="UniProtKB-SubCell"/>
</dbReference>
<dbReference type="GO" id="GO:0045259">
    <property type="term" value="C:proton-transporting ATP synthase complex"/>
    <property type="evidence" value="ECO:0007669"/>
    <property type="project" value="UniProtKB-KW"/>
</dbReference>
<dbReference type="GO" id="GO:0043531">
    <property type="term" value="F:ADP binding"/>
    <property type="evidence" value="ECO:0007669"/>
    <property type="project" value="TreeGrafter"/>
</dbReference>
<dbReference type="GO" id="GO:0005524">
    <property type="term" value="F:ATP binding"/>
    <property type="evidence" value="ECO:0007669"/>
    <property type="project" value="UniProtKB-UniRule"/>
</dbReference>
<dbReference type="GO" id="GO:0046933">
    <property type="term" value="F:proton-transporting ATP synthase activity, rotational mechanism"/>
    <property type="evidence" value="ECO:0007669"/>
    <property type="project" value="UniProtKB-UniRule"/>
</dbReference>
<dbReference type="CDD" id="cd18113">
    <property type="entry name" value="ATP-synt_F1_alpha_C"/>
    <property type="match status" value="1"/>
</dbReference>
<dbReference type="CDD" id="cd18116">
    <property type="entry name" value="ATP-synt_F1_alpha_N"/>
    <property type="match status" value="1"/>
</dbReference>
<dbReference type="CDD" id="cd01132">
    <property type="entry name" value="F1-ATPase_alpha_CD"/>
    <property type="match status" value="1"/>
</dbReference>
<dbReference type="FunFam" id="1.20.150.20:FF:000001">
    <property type="entry name" value="ATP synthase subunit alpha"/>
    <property type="match status" value="1"/>
</dbReference>
<dbReference type="FunFam" id="2.40.30.20:FF:000001">
    <property type="entry name" value="ATP synthase subunit alpha"/>
    <property type="match status" value="1"/>
</dbReference>
<dbReference type="FunFam" id="3.40.50.300:FF:000002">
    <property type="entry name" value="ATP synthase subunit alpha"/>
    <property type="match status" value="1"/>
</dbReference>
<dbReference type="Gene3D" id="2.40.30.20">
    <property type="match status" value="1"/>
</dbReference>
<dbReference type="Gene3D" id="1.20.150.20">
    <property type="entry name" value="ATP synthase alpha/beta chain, C-terminal domain"/>
    <property type="match status" value="1"/>
</dbReference>
<dbReference type="Gene3D" id="3.40.50.300">
    <property type="entry name" value="P-loop containing nucleotide triphosphate hydrolases"/>
    <property type="match status" value="1"/>
</dbReference>
<dbReference type="HAMAP" id="MF_01346">
    <property type="entry name" value="ATP_synth_alpha_bact"/>
    <property type="match status" value="1"/>
</dbReference>
<dbReference type="InterPro" id="IPR023366">
    <property type="entry name" value="ATP_synth_asu-like_sf"/>
</dbReference>
<dbReference type="InterPro" id="IPR000793">
    <property type="entry name" value="ATP_synth_asu_C"/>
</dbReference>
<dbReference type="InterPro" id="IPR038376">
    <property type="entry name" value="ATP_synth_asu_C_sf"/>
</dbReference>
<dbReference type="InterPro" id="IPR033732">
    <property type="entry name" value="ATP_synth_F1_a_nt-bd_dom"/>
</dbReference>
<dbReference type="InterPro" id="IPR005294">
    <property type="entry name" value="ATP_synth_F1_asu"/>
</dbReference>
<dbReference type="InterPro" id="IPR020003">
    <property type="entry name" value="ATPase_a/bsu_AS"/>
</dbReference>
<dbReference type="InterPro" id="IPR004100">
    <property type="entry name" value="ATPase_F1/V1/A1_a/bsu_N"/>
</dbReference>
<dbReference type="InterPro" id="IPR036121">
    <property type="entry name" value="ATPase_F1/V1/A1_a/bsu_N_sf"/>
</dbReference>
<dbReference type="InterPro" id="IPR000194">
    <property type="entry name" value="ATPase_F1/V1/A1_a/bsu_nucl-bd"/>
</dbReference>
<dbReference type="InterPro" id="IPR027417">
    <property type="entry name" value="P-loop_NTPase"/>
</dbReference>
<dbReference type="NCBIfam" id="TIGR00962">
    <property type="entry name" value="atpA"/>
    <property type="match status" value="1"/>
</dbReference>
<dbReference type="NCBIfam" id="NF009884">
    <property type="entry name" value="PRK13343.1"/>
    <property type="match status" value="1"/>
</dbReference>
<dbReference type="PANTHER" id="PTHR48082">
    <property type="entry name" value="ATP SYNTHASE SUBUNIT ALPHA, MITOCHONDRIAL"/>
    <property type="match status" value="1"/>
</dbReference>
<dbReference type="PANTHER" id="PTHR48082:SF2">
    <property type="entry name" value="ATP SYNTHASE SUBUNIT ALPHA, MITOCHONDRIAL"/>
    <property type="match status" value="1"/>
</dbReference>
<dbReference type="Pfam" id="PF00006">
    <property type="entry name" value="ATP-synt_ab"/>
    <property type="match status" value="1"/>
</dbReference>
<dbReference type="Pfam" id="PF00306">
    <property type="entry name" value="ATP-synt_ab_C"/>
    <property type="match status" value="1"/>
</dbReference>
<dbReference type="Pfam" id="PF02874">
    <property type="entry name" value="ATP-synt_ab_N"/>
    <property type="match status" value="1"/>
</dbReference>
<dbReference type="PIRSF" id="PIRSF039088">
    <property type="entry name" value="F_ATPase_subunit_alpha"/>
    <property type="match status" value="1"/>
</dbReference>
<dbReference type="SUPFAM" id="SSF47917">
    <property type="entry name" value="C-terminal domain of alpha and beta subunits of F1 ATP synthase"/>
    <property type="match status" value="1"/>
</dbReference>
<dbReference type="SUPFAM" id="SSF50615">
    <property type="entry name" value="N-terminal domain of alpha and beta subunits of F1 ATP synthase"/>
    <property type="match status" value="1"/>
</dbReference>
<dbReference type="SUPFAM" id="SSF52540">
    <property type="entry name" value="P-loop containing nucleoside triphosphate hydrolases"/>
    <property type="match status" value="1"/>
</dbReference>
<dbReference type="PROSITE" id="PS00152">
    <property type="entry name" value="ATPASE_ALPHA_BETA"/>
    <property type="match status" value="1"/>
</dbReference>
<organism>
    <name type="scientific">Chlorobium phaeobacteroides (strain DSM 266 / SMG 266 / 2430)</name>
    <dbReference type="NCBI Taxonomy" id="290317"/>
    <lineage>
        <taxon>Bacteria</taxon>
        <taxon>Pseudomonadati</taxon>
        <taxon>Chlorobiota</taxon>
        <taxon>Chlorobiia</taxon>
        <taxon>Chlorobiales</taxon>
        <taxon>Chlorobiaceae</taxon>
        <taxon>Chlorobium/Pelodictyon group</taxon>
        <taxon>Chlorobium</taxon>
    </lineage>
</organism>
<keyword id="KW-0066">ATP synthesis</keyword>
<keyword id="KW-0067">ATP-binding</keyword>
<keyword id="KW-0997">Cell inner membrane</keyword>
<keyword id="KW-1003">Cell membrane</keyword>
<keyword id="KW-0139">CF(1)</keyword>
<keyword id="KW-0375">Hydrogen ion transport</keyword>
<keyword id="KW-0406">Ion transport</keyword>
<keyword id="KW-0472">Membrane</keyword>
<keyword id="KW-0547">Nucleotide-binding</keyword>
<keyword id="KW-1185">Reference proteome</keyword>
<keyword id="KW-1278">Translocase</keyword>
<keyword id="KW-0813">Transport</keyword>